<protein>
    <recommendedName>
        <fullName evidence="1">RNA polymerase-binding transcription factor DksA</fullName>
    </recommendedName>
</protein>
<evidence type="ECO:0000255" key="1">
    <source>
        <dbReference type="HAMAP-Rule" id="MF_00926"/>
    </source>
</evidence>
<keyword id="KW-0963">Cytoplasm</keyword>
<keyword id="KW-0479">Metal-binding</keyword>
<keyword id="KW-1185">Reference proteome</keyword>
<keyword id="KW-0862">Zinc</keyword>
<keyword id="KW-0863">Zinc-finger</keyword>
<feature type="chain" id="PRO_0000187546" description="RNA polymerase-binding transcription factor DksA">
    <location>
        <begin position="1"/>
        <end position="145"/>
    </location>
</feature>
<feature type="zinc finger region" description="dksA C4-type" evidence="1">
    <location>
        <begin position="108"/>
        <end position="132"/>
    </location>
</feature>
<feature type="binding site" evidence="1">
    <location>
        <position position="108"/>
    </location>
    <ligand>
        <name>Zn(2+)</name>
        <dbReference type="ChEBI" id="CHEBI:29105"/>
    </ligand>
</feature>
<feature type="binding site" evidence="1">
    <location>
        <position position="111"/>
    </location>
    <ligand>
        <name>Zn(2+)</name>
        <dbReference type="ChEBI" id="CHEBI:29105"/>
    </ligand>
</feature>
<feature type="binding site" evidence="1">
    <location>
        <position position="129"/>
    </location>
    <ligand>
        <name>Zn(2+)</name>
        <dbReference type="ChEBI" id="CHEBI:29105"/>
    </ligand>
</feature>
<feature type="binding site" evidence="1">
    <location>
        <position position="132"/>
    </location>
    <ligand>
        <name>Zn(2+)</name>
        <dbReference type="ChEBI" id="CHEBI:29105"/>
    </ligand>
</feature>
<name>DKSA_HAEIN</name>
<comment type="function">
    <text evidence="1">Transcription factor that acts by binding directly to the RNA polymerase (RNAP). Required for negative regulation of rRNA expression and positive regulation of several amino acid biosynthesis promoters. Also required for regulation of fis expression.</text>
</comment>
<comment type="subunit">
    <text evidence="1">Interacts directly with the RNA polymerase.</text>
</comment>
<comment type="subcellular location">
    <subcellularLocation>
        <location evidence="1">Cytoplasm</location>
    </subcellularLocation>
</comment>
<comment type="similarity">
    <text evidence="1">Belongs to the DksA family.</text>
</comment>
<proteinExistence type="inferred from homology"/>
<gene>
    <name evidence="1" type="primary">dksA</name>
    <name type="synonym">dsh-1</name>
    <name type="ordered locus">HI_0062</name>
</gene>
<organism>
    <name type="scientific">Haemophilus influenzae (strain ATCC 51907 / DSM 11121 / KW20 / Rd)</name>
    <dbReference type="NCBI Taxonomy" id="71421"/>
    <lineage>
        <taxon>Bacteria</taxon>
        <taxon>Pseudomonadati</taxon>
        <taxon>Pseudomonadota</taxon>
        <taxon>Gammaproteobacteria</taxon>
        <taxon>Pasteurellales</taxon>
        <taxon>Pasteurellaceae</taxon>
        <taxon>Haemophilus</taxon>
    </lineage>
</organism>
<reference key="1">
    <citation type="journal article" date="1995" name="Science">
        <title>Whole-genome random sequencing and assembly of Haemophilus influenzae Rd.</title>
        <authorList>
            <person name="Fleischmann R.D."/>
            <person name="Adams M.D."/>
            <person name="White O."/>
            <person name="Clayton R.A."/>
            <person name="Kirkness E.F."/>
            <person name="Kerlavage A.R."/>
            <person name="Bult C.J."/>
            <person name="Tomb J.-F."/>
            <person name="Dougherty B.A."/>
            <person name="Merrick J.M."/>
            <person name="McKenney K."/>
            <person name="Sutton G.G."/>
            <person name="FitzHugh W."/>
            <person name="Fields C.A."/>
            <person name="Gocayne J.D."/>
            <person name="Scott J.D."/>
            <person name="Shirley R."/>
            <person name="Liu L.-I."/>
            <person name="Glodek A."/>
            <person name="Kelley J.M."/>
            <person name="Weidman J.F."/>
            <person name="Phillips C.A."/>
            <person name="Spriggs T."/>
            <person name="Hedblom E."/>
            <person name="Cotton M.D."/>
            <person name="Utterback T.R."/>
            <person name="Hanna M.C."/>
            <person name="Nguyen D.T."/>
            <person name="Saudek D.M."/>
            <person name="Brandon R.C."/>
            <person name="Fine L.D."/>
            <person name="Fritchman J.L."/>
            <person name="Fuhrmann J.L."/>
            <person name="Geoghagen N.S.M."/>
            <person name="Gnehm C.L."/>
            <person name="McDonald L.A."/>
            <person name="Small K.V."/>
            <person name="Fraser C.M."/>
            <person name="Smith H.O."/>
            <person name="Venter J.C."/>
        </authorList>
    </citation>
    <scope>NUCLEOTIDE SEQUENCE [LARGE SCALE GENOMIC DNA]</scope>
    <source>
        <strain>ATCC 51907 / DSM 11121 / KW20 / Rd</strain>
    </source>
</reference>
<reference key="2">
    <citation type="journal article" date="1994" name="Gene">
        <title>Sequence of the rec-2 locus of Haemophilus influenzae: homologies to comE-ORF3 of Bacillus subtilis and msbA of Escherichia coli.</title>
        <authorList>
            <person name="Clifton S.W."/>
            <person name="McCarthy D."/>
            <person name="Roe B.A."/>
        </authorList>
    </citation>
    <scope>NUCLEOTIDE SEQUENCE [GENOMIC DNA] OF 1-67</scope>
    <source>
        <strain>BC200</strain>
    </source>
</reference>
<sequence>MSRASLSLLDLAGVKPYQMKKDEEYMNEEQILHFRKILNAWHEQIVEEASRTVAHMQDEVTNFPDPADRATQEEEFSLELRNRDRERKLMKKIEATLKKLDTDDFGYCDCCGEEIGIRRLEARPTADLCIDCKTLAEIREKQVAG</sequence>
<dbReference type="EMBL" id="L42023">
    <property type="protein sequence ID" value="AAC21740.1"/>
    <property type="molecule type" value="Genomic_DNA"/>
</dbReference>
<dbReference type="EMBL" id="L20805">
    <property type="protein sequence ID" value="AAC13732.1"/>
    <property type="molecule type" value="Genomic_DNA"/>
</dbReference>
<dbReference type="PIR" id="A64046">
    <property type="entry name" value="A64046"/>
</dbReference>
<dbReference type="RefSeq" id="NP_438235.1">
    <property type="nucleotide sequence ID" value="NC_000907.1"/>
</dbReference>
<dbReference type="SMR" id="P43758"/>
<dbReference type="STRING" id="71421.HI_0062"/>
<dbReference type="DNASU" id="950956"/>
<dbReference type="EnsemblBacteria" id="AAC21740">
    <property type="protein sequence ID" value="AAC21740"/>
    <property type="gene ID" value="HI_0062"/>
</dbReference>
<dbReference type="KEGG" id="hin:HI_0062"/>
<dbReference type="PATRIC" id="fig|71421.8.peg.62"/>
<dbReference type="eggNOG" id="COG1734">
    <property type="taxonomic scope" value="Bacteria"/>
</dbReference>
<dbReference type="HOGENOM" id="CLU_043144_2_0_6"/>
<dbReference type="OrthoDB" id="9803742at2"/>
<dbReference type="PhylomeDB" id="P43758"/>
<dbReference type="BioCyc" id="HINF71421:G1GJ1-63-MONOMER"/>
<dbReference type="Proteomes" id="UP000000579">
    <property type="component" value="Chromosome"/>
</dbReference>
<dbReference type="GO" id="GO:0005737">
    <property type="term" value="C:cytoplasm"/>
    <property type="evidence" value="ECO:0007669"/>
    <property type="project" value="UniProtKB-SubCell"/>
</dbReference>
<dbReference type="GO" id="GO:0008270">
    <property type="term" value="F:zinc ion binding"/>
    <property type="evidence" value="ECO:0007669"/>
    <property type="project" value="UniProtKB-UniRule"/>
</dbReference>
<dbReference type="GO" id="GO:0006355">
    <property type="term" value="P:regulation of DNA-templated transcription"/>
    <property type="evidence" value="ECO:0000318"/>
    <property type="project" value="GO_Central"/>
</dbReference>
<dbReference type="Gene3D" id="1.20.120.910">
    <property type="entry name" value="DksA, coiled-coil domain"/>
    <property type="match status" value="1"/>
</dbReference>
<dbReference type="HAMAP" id="MF_00926">
    <property type="entry name" value="DksA"/>
    <property type="match status" value="1"/>
</dbReference>
<dbReference type="InterPro" id="IPR048489">
    <property type="entry name" value="DksA_N"/>
</dbReference>
<dbReference type="InterPro" id="IPR012784">
    <property type="entry name" value="DksA_RNA_pol-bd"/>
</dbReference>
<dbReference type="InterPro" id="IPR037187">
    <property type="entry name" value="DnaK_N"/>
</dbReference>
<dbReference type="InterPro" id="IPR000962">
    <property type="entry name" value="Znf_DskA_TraR"/>
</dbReference>
<dbReference type="InterPro" id="IPR020458">
    <property type="entry name" value="Znf_DskA_TraR_CS"/>
</dbReference>
<dbReference type="NCBIfam" id="TIGR02420">
    <property type="entry name" value="dksA"/>
    <property type="match status" value="1"/>
</dbReference>
<dbReference type="PANTHER" id="PTHR33823:SF2">
    <property type="entry name" value="RNA POLYMERASE-BINDING TRANSCRIPTION FACTOR DKSA"/>
    <property type="match status" value="1"/>
</dbReference>
<dbReference type="PANTHER" id="PTHR33823">
    <property type="entry name" value="RNA POLYMERASE-BINDING TRANSCRIPTION FACTOR DKSA-RELATED"/>
    <property type="match status" value="1"/>
</dbReference>
<dbReference type="Pfam" id="PF21157">
    <property type="entry name" value="DksA_N"/>
    <property type="match status" value="1"/>
</dbReference>
<dbReference type="Pfam" id="PF01258">
    <property type="entry name" value="zf-dskA_traR"/>
    <property type="match status" value="1"/>
</dbReference>
<dbReference type="SUPFAM" id="SSF109635">
    <property type="entry name" value="DnaK suppressor protein DksA, alpha-hairpin domain"/>
    <property type="match status" value="1"/>
</dbReference>
<dbReference type="SUPFAM" id="SSF57716">
    <property type="entry name" value="Glucocorticoid receptor-like (DNA-binding domain)"/>
    <property type="match status" value="1"/>
</dbReference>
<dbReference type="PROSITE" id="PS01102">
    <property type="entry name" value="ZF_DKSA_1"/>
    <property type="match status" value="1"/>
</dbReference>
<dbReference type="PROSITE" id="PS51128">
    <property type="entry name" value="ZF_DKSA_2"/>
    <property type="match status" value="1"/>
</dbReference>
<accession>P43758</accession>